<accession>Q9JI85</accession>
<sequence>MRWRTIQARYCFLLVPCVLTALEAVPIDVDKTKVHNVEPVESARIEPPDTGLYYDEYLKQVIEVLETDPHFREKLQKADIEEIRSGRLSQELDLVSHKVRTRLDELKRQEVGRLRMLIKAKLDALQDTGMNHHLLLKQFEHLNHQNPDTFESKDLDMLIKAATADLEQYDRTRHEEFKKYEMMKEHERREYLKTLSEEKRKEEEAKFAEMKRKHEDHPKVNHPGSKDQLKEVWEETDGLDPNDFDPKTFFKLHDVNNDGFLDEQELEALFTKELDKVYNPQNAEDDMIEMEEERLRMREHVMNEIDNNKDRLVTLEEFLRATEKKEFLEPDSWETLDQQQLFTEEELKEYESIIAIQESELKKKADELQKQKEELQRQHDHLEAQKQEYQQAVQQLEQKKFQQGIAPSGPAGELKFEPHT</sequence>
<name>NUCB2_RAT</name>
<gene>
    <name type="primary">Nucb2</name>
    <name type="synonym">Nefa</name>
</gene>
<proteinExistence type="evidence at protein level"/>
<comment type="function">
    <text evidence="3 8">Calcium-binding protein which may have a role in calcium homeostasis (By similarity). Acts as a non-receptor guanine nucleotide exchange factor which binds to and activates guanine nucleotide-binding protein (G-protein) alpha subunit GNAI3 (PubMed:21653697).</text>
</comment>
<comment type="function">
    <molecule>Nesfatin-1</molecule>
    <text evidence="2 7 9">Anorexigenic peptide, seems to play an important role in hypothalamic pathways regulating food intake and energy homeostasis, acting in a leptin-independent manner. May also exert hypertensive roles and modulate blood pressure through directly acting on peripheral arterial resistance. In intestinal epithelial cells, plays a role in the inhibition of hepatic glucose production via MC4R receptor leading to increased cyclic adenosine monophosphate (cAMP) levels and glucagon-like peptide 1 (GLP-1) secretion (By similarity).</text>
</comment>
<comment type="subunit">
    <text evidence="2 3 8">Interacts (via GBA motif) with guanine nucleotide-binding protein G(i) alpha subunit GNAI3 (PubMed:21653697). Preferentially interacts with inactive rather than active GNAI3 (PubMed:21653697). Interaction with GNAI3 is inhibited when NUCB2 binds calcium, probably due to a conformational change which renders the GBA motif inaccessible (PubMed:21653697). Binds to the postmitotic growth suppressor NDN; coexpression abolishes NUCB2 secretion (By similarity). Interacts with MC4R (By similarity).</text>
</comment>
<comment type="subcellular location">
    <subcellularLocation>
        <location evidence="1">Golgi apparatus</location>
    </subcellularLocation>
    <subcellularLocation>
        <location evidence="1">Endoplasmic reticulum</location>
    </subcellularLocation>
    <subcellularLocation>
        <location evidence="1">Nucleus envelope</location>
    </subcellularLocation>
    <subcellularLocation>
        <location evidence="1">Membrane</location>
        <topology evidence="1">Peripheral membrane protein</topology>
    </subcellularLocation>
    <subcellularLocation>
        <location evidence="1">Cytoplasm</location>
    </subcellularLocation>
    <subcellularLocation>
        <location evidence="1">Secreted</location>
    </subcellularLocation>
</comment>
<comment type="subcellular location">
    <molecule>Nesfatin-1</molecule>
    <subcellularLocation>
        <location>Secreted</location>
    </subcellularLocation>
</comment>
<comment type="domain">
    <text evidence="8">The GBA (G-alpha binding and activating) motif mediates binding to the alpha subunits of guanine nucleotide-binding proteins (G proteins).</text>
</comment>
<comment type="miscellaneous">
    <text>NEFA stands for N=DNA-binding; EF=EF-hand; A=Acidic region.</text>
</comment>
<comment type="similarity">
    <text evidence="10">Belongs to the nucleobindin family.</text>
</comment>
<keyword id="KW-0106">Calcium</keyword>
<keyword id="KW-0165">Cleavage on pair of basic residues</keyword>
<keyword id="KW-0963">Cytoplasm</keyword>
<keyword id="KW-0238">DNA-binding</keyword>
<keyword id="KW-0256">Endoplasmic reticulum</keyword>
<keyword id="KW-0333">Golgi apparatus</keyword>
<keyword id="KW-0344">Guanine-nucleotide releasing factor</keyword>
<keyword id="KW-0472">Membrane</keyword>
<keyword id="KW-0479">Metal-binding</keyword>
<keyword id="KW-0539">Nucleus</keyword>
<keyword id="KW-0597">Phosphoprotein</keyword>
<keyword id="KW-1185">Reference proteome</keyword>
<keyword id="KW-0677">Repeat</keyword>
<keyword id="KW-0964">Secreted</keyword>
<keyword id="KW-0732">Signal</keyword>
<dbReference type="EMBL" id="AF250142">
    <property type="protein sequence ID" value="AAF75993.1"/>
    <property type="molecule type" value="mRNA"/>
</dbReference>
<dbReference type="EMBL" id="AF238223">
    <property type="protein sequence ID" value="AAK66864.1"/>
    <property type="molecule type" value="mRNA"/>
</dbReference>
<dbReference type="EMBL" id="BC061778">
    <property type="protein sequence ID" value="AAH61778.1"/>
    <property type="molecule type" value="mRNA"/>
</dbReference>
<dbReference type="RefSeq" id="NP_067695.1">
    <property type="nucleotide sequence ID" value="NM_021663.2"/>
</dbReference>
<dbReference type="SMR" id="Q9JI85"/>
<dbReference type="FunCoup" id="Q9JI85">
    <property type="interactions" value="2490"/>
</dbReference>
<dbReference type="IntAct" id="Q9JI85">
    <property type="interactions" value="2"/>
</dbReference>
<dbReference type="STRING" id="10116.ENSRNOP00000027753"/>
<dbReference type="iPTMnet" id="Q9JI85"/>
<dbReference type="PhosphoSitePlus" id="Q9JI85"/>
<dbReference type="jPOST" id="Q9JI85"/>
<dbReference type="PaxDb" id="10116-ENSRNOP00000027753"/>
<dbReference type="GeneID" id="59295"/>
<dbReference type="KEGG" id="rno:59295"/>
<dbReference type="UCSC" id="RGD:620888">
    <property type="organism name" value="rat"/>
</dbReference>
<dbReference type="AGR" id="RGD:620888"/>
<dbReference type="CTD" id="4925"/>
<dbReference type="RGD" id="620888">
    <property type="gene designation" value="Nucb2"/>
</dbReference>
<dbReference type="eggNOG" id="KOG3866">
    <property type="taxonomic scope" value="Eukaryota"/>
</dbReference>
<dbReference type="InParanoid" id="Q9JI85"/>
<dbReference type="OrthoDB" id="5982823at2759"/>
<dbReference type="PhylomeDB" id="Q9JI85"/>
<dbReference type="PRO" id="PR:Q9JI85"/>
<dbReference type="Proteomes" id="UP000002494">
    <property type="component" value="Unplaced"/>
</dbReference>
<dbReference type="GO" id="GO:0005737">
    <property type="term" value="C:cytoplasm"/>
    <property type="evidence" value="ECO:0000266"/>
    <property type="project" value="RGD"/>
</dbReference>
<dbReference type="GO" id="GO:0005783">
    <property type="term" value="C:endoplasmic reticulum"/>
    <property type="evidence" value="ECO:0000266"/>
    <property type="project" value="RGD"/>
</dbReference>
<dbReference type="GO" id="GO:0005793">
    <property type="term" value="C:endoplasmic reticulum-Golgi intermediate compartment"/>
    <property type="evidence" value="ECO:0000266"/>
    <property type="project" value="RGD"/>
</dbReference>
<dbReference type="GO" id="GO:0005615">
    <property type="term" value="C:extracellular space"/>
    <property type="evidence" value="ECO:0000314"/>
    <property type="project" value="RGD"/>
</dbReference>
<dbReference type="GO" id="GO:0005797">
    <property type="term" value="C:Golgi medial cisterna"/>
    <property type="evidence" value="ECO:0000314"/>
    <property type="project" value="RGD"/>
</dbReference>
<dbReference type="GO" id="GO:0005640">
    <property type="term" value="C:nuclear outer membrane"/>
    <property type="evidence" value="ECO:0000266"/>
    <property type="project" value="RGD"/>
</dbReference>
<dbReference type="GO" id="GO:0005634">
    <property type="term" value="C:nucleus"/>
    <property type="evidence" value="ECO:0000266"/>
    <property type="project" value="RGD"/>
</dbReference>
<dbReference type="GO" id="GO:0005509">
    <property type="term" value="F:calcium ion binding"/>
    <property type="evidence" value="ECO:0000266"/>
    <property type="project" value="RGD"/>
</dbReference>
<dbReference type="GO" id="GO:0003677">
    <property type="term" value="F:DNA binding"/>
    <property type="evidence" value="ECO:0007669"/>
    <property type="project" value="UniProtKB-KW"/>
</dbReference>
<dbReference type="GO" id="GO:0001965">
    <property type="term" value="F:G-protein alpha-subunit binding"/>
    <property type="evidence" value="ECO:0000314"/>
    <property type="project" value="UniProtKB"/>
</dbReference>
<dbReference type="GO" id="GO:0005085">
    <property type="term" value="F:guanyl-nucleotide exchange factor activity"/>
    <property type="evidence" value="ECO:0000314"/>
    <property type="project" value="UniProtKB"/>
</dbReference>
<dbReference type="GO" id="GO:0005164">
    <property type="term" value="F:tumor necrosis factor receptor binding"/>
    <property type="evidence" value="ECO:0000353"/>
    <property type="project" value="RGD"/>
</dbReference>
<dbReference type="GO" id="GO:1901142">
    <property type="term" value="P:insulin metabolic process"/>
    <property type="evidence" value="ECO:0000314"/>
    <property type="project" value="RGD"/>
</dbReference>
<dbReference type="GO" id="GO:0032099">
    <property type="term" value="P:negative regulation of appetite"/>
    <property type="evidence" value="ECO:0000315"/>
    <property type="project" value="RGD"/>
</dbReference>
<dbReference type="GO" id="GO:0141162">
    <property type="term" value="P:negative regulation of cAMP/PKA signal transduction"/>
    <property type="evidence" value="ECO:0000314"/>
    <property type="project" value="RGD"/>
</dbReference>
<dbReference type="GO" id="GO:0045599">
    <property type="term" value="P:negative regulation of fat cell differentiation"/>
    <property type="evidence" value="ECO:0000314"/>
    <property type="project" value="RGD"/>
</dbReference>
<dbReference type="GO" id="GO:0070093">
    <property type="term" value="P:negative regulation of glucagon secretion"/>
    <property type="evidence" value="ECO:0000314"/>
    <property type="project" value="RGD"/>
</dbReference>
<dbReference type="GO" id="GO:0046627">
    <property type="term" value="P:negative regulation of insulin receptor signaling pathway"/>
    <property type="evidence" value="ECO:0000314"/>
    <property type="project" value="RGD"/>
</dbReference>
<dbReference type="GO" id="GO:0046321">
    <property type="term" value="P:positive regulation of fatty acid oxidation"/>
    <property type="evidence" value="ECO:0000314"/>
    <property type="project" value="RGD"/>
</dbReference>
<dbReference type="GO" id="GO:2000845">
    <property type="term" value="P:positive regulation of testosterone secretion"/>
    <property type="evidence" value="ECO:0000314"/>
    <property type="project" value="RGD"/>
</dbReference>
<dbReference type="GO" id="GO:0009749">
    <property type="term" value="P:response to glucose"/>
    <property type="evidence" value="ECO:0000270"/>
    <property type="project" value="RGD"/>
</dbReference>
<dbReference type="GO" id="GO:0044752">
    <property type="term" value="P:response to human chorionic gonadotropin"/>
    <property type="evidence" value="ECO:0000270"/>
    <property type="project" value="RGD"/>
</dbReference>
<dbReference type="GO" id="GO:1990680">
    <property type="term" value="P:response to melanocyte-stimulating hormone"/>
    <property type="evidence" value="ECO:0000270"/>
    <property type="project" value="RGD"/>
</dbReference>
<dbReference type="GO" id="GO:0042594">
    <property type="term" value="P:response to starvation"/>
    <property type="evidence" value="ECO:0000270"/>
    <property type="project" value="RGD"/>
</dbReference>
<dbReference type="GO" id="GO:0007264">
    <property type="term" value="P:small GTPase-mediated signal transduction"/>
    <property type="evidence" value="ECO:0000314"/>
    <property type="project" value="UniProtKB"/>
</dbReference>
<dbReference type="FunFam" id="1.10.238.10:FF:000045">
    <property type="entry name" value="Nucleobindin 2"/>
    <property type="match status" value="1"/>
</dbReference>
<dbReference type="Gene3D" id="1.10.238.10">
    <property type="entry name" value="EF-hand"/>
    <property type="match status" value="1"/>
</dbReference>
<dbReference type="InterPro" id="IPR011992">
    <property type="entry name" value="EF-hand-dom_pair"/>
</dbReference>
<dbReference type="InterPro" id="IPR018247">
    <property type="entry name" value="EF_Hand_1_Ca_BS"/>
</dbReference>
<dbReference type="InterPro" id="IPR002048">
    <property type="entry name" value="EF_hand_dom"/>
</dbReference>
<dbReference type="InterPro" id="IPR040250">
    <property type="entry name" value="Nucleobindin"/>
</dbReference>
<dbReference type="PANTHER" id="PTHR19237">
    <property type="entry name" value="NUCLEOBINDIN"/>
    <property type="match status" value="1"/>
</dbReference>
<dbReference type="PANTHER" id="PTHR19237:SF22">
    <property type="entry name" value="NUCLEOBINDIN-2"/>
    <property type="match status" value="1"/>
</dbReference>
<dbReference type="Pfam" id="PF13499">
    <property type="entry name" value="EF-hand_7"/>
    <property type="match status" value="1"/>
</dbReference>
<dbReference type="Pfam" id="PF25434">
    <property type="entry name" value="NUCB1_N"/>
    <property type="match status" value="1"/>
</dbReference>
<dbReference type="SMART" id="SM00054">
    <property type="entry name" value="EFh"/>
    <property type="match status" value="2"/>
</dbReference>
<dbReference type="SUPFAM" id="SSF47473">
    <property type="entry name" value="EF-hand"/>
    <property type="match status" value="1"/>
</dbReference>
<dbReference type="PROSITE" id="PS00018">
    <property type="entry name" value="EF_HAND_1"/>
    <property type="match status" value="2"/>
</dbReference>
<dbReference type="PROSITE" id="PS50222">
    <property type="entry name" value="EF_HAND_2"/>
    <property type="match status" value="2"/>
</dbReference>
<reference key="1">
    <citation type="submission" date="2000-03" db="EMBL/GenBank/DDBJ databases">
        <title>Rat NEFA mRNA.</title>
        <authorList>
            <person name="Hirschfeld G."/>
            <person name="Heiden I."/>
            <person name="Barnikol-Watanabe S."/>
            <person name="Barnikol H.U."/>
            <person name="Hilschmann N."/>
        </authorList>
    </citation>
    <scope>NUCLEOTIDE SEQUENCE [MRNA]</scope>
    <source>
        <strain>Sprague-Dawley</strain>
        <tissue>Ovary</tissue>
    </source>
</reference>
<reference key="2">
    <citation type="submission" date="2000-02" db="EMBL/GenBank/DDBJ databases">
        <title>Characterization of rat NEFA protein.</title>
        <authorList>
            <person name="Hauge X."/>
            <person name="Neve K.A."/>
        </authorList>
    </citation>
    <scope>NUCLEOTIDE SEQUENCE [MRNA]</scope>
</reference>
<reference key="3">
    <citation type="journal article" date="2004" name="Genome Res.">
        <title>The status, quality, and expansion of the NIH full-length cDNA project: the Mammalian Gene Collection (MGC).</title>
        <authorList>
            <consortium name="The MGC Project Team"/>
        </authorList>
    </citation>
    <scope>NUCLEOTIDE SEQUENCE [LARGE SCALE MRNA]</scope>
    <source>
        <tissue>Prostate</tissue>
    </source>
</reference>
<reference key="4">
    <citation type="journal article" date="2006" name="Nature">
        <title>Identification of nesfatin-1 as a satiety molecule in the hypothalamus.</title>
        <authorList>
            <person name="Oh-I S."/>
            <person name="Shimizu H."/>
            <person name="Satoh T."/>
            <person name="Okada S."/>
            <person name="Adachi S."/>
            <person name="Inoue K."/>
            <person name="Eguchi H."/>
            <person name="Yamamoto M."/>
            <person name="Imaki T."/>
            <person name="Hashimoto K."/>
            <person name="Tsuchiya T."/>
            <person name="Monden T."/>
            <person name="Horiguchi K."/>
            <person name="Yamada M."/>
            <person name="Mori M."/>
        </authorList>
    </citation>
    <scope>FUNCTION OF NESFATIN</scope>
</reference>
<reference key="5">
    <citation type="journal article" date="2011" name="J. Biol. Chem.">
        <title>G Protein binding sites on Calnuc (nucleobindin 1) and NUCB2 (nucleobindin 2) define a new class of G(alpha)i-regulatory motifs.</title>
        <authorList>
            <person name="Garcia-Marcos M."/>
            <person name="Kietrsunthorn P.S."/>
            <person name="Wang H."/>
            <person name="Ghosh P."/>
            <person name="Farquhar M.G."/>
        </authorList>
    </citation>
    <scope>FUNCTION</scope>
    <scope>INTERACTION WITH GNAI3</scope>
    <scope>GBA MOTIF</scope>
    <scope>MUTAGENESIS OF LEU-315; PHE-318 AND LEU-319</scope>
</reference>
<reference key="6">
    <citation type="journal article" date="2012" name="Biochem. Biophys. Res. Commun.">
        <title>A novel adipocytokine, nesfatin-1 modulates peripheral arterial contractility and blood pressure in rats.</title>
        <authorList>
            <person name="Yamawaki H."/>
            <person name="Takahashi M."/>
            <person name="Mukohda M."/>
            <person name="Morita T."/>
            <person name="Okada M."/>
            <person name="Hara Y."/>
        </authorList>
    </citation>
    <scope>FUNCTION OF NESFATIN</scope>
</reference>
<reference key="7">
    <citation type="journal article" date="2012" name="Nat. Commun.">
        <title>Quantitative maps of protein phosphorylation sites across 14 different rat organs and tissues.</title>
        <authorList>
            <person name="Lundby A."/>
            <person name="Secher A."/>
            <person name="Lage K."/>
            <person name="Nordsborg N.B."/>
            <person name="Dmytriyev A."/>
            <person name="Lundby C."/>
            <person name="Olsen J.V."/>
        </authorList>
    </citation>
    <scope>PHOSPHORYLATION [LARGE SCALE ANALYSIS] AT SER-332</scope>
    <scope>IDENTIFICATION BY MASS SPECTROMETRY [LARGE SCALE ANALYSIS]</scope>
</reference>
<protein>
    <recommendedName>
        <fullName>Nucleobindin-2</fullName>
    </recommendedName>
    <alternativeName>
        <fullName>DNA-binding protein NEFA</fullName>
    </alternativeName>
    <alternativeName>
        <fullName>Prepronesfatin</fullName>
    </alternativeName>
    <component>
        <recommendedName>
            <fullName>Nesfatin-1</fullName>
        </recommendedName>
    </component>
</protein>
<evidence type="ECO:0000250" key="1"/>
<evidence type="ECO:0000250" key="2">
    <source>
        <dbReference type="UniProtKB" id="P80303"/>
    </source>
</evidence>
<evidence type="ECO:0000250" key="3">
    <source>
        <dbReference type="UniProtKB" id="P81117"/>
    </source>
</evidence>
<evidence type="ECO:0000255" key="4"/>
<evidence type="ECO:0000255" key="5">
    <source>
        <dbReference type="PROSITE-ProRule" id="PRU00448"/>
    </source>
</evidence>
<evidence type="ECO:0000256" key="6">
    <source>
        <dbReference type="SAM" id="MobiDB-lite"/>
    </source>
</evidence>
<evidence type="ECO:0000269" key="7">
    <source>
    </source>
</evidence>
<evidence type="ECO:0000269" key="8">
    <source>
    </source>
</evidence>
<evidence type="ECO:0000269" key="9">
    <source>
    </source>
</evidence>
<evidence type="ECO:0000305" key="10"/>
<evidence type="ECO:0007744" key="11">
    <source>
    </source>
</evidence>
<feature type="signal peptide" evidence="4">
    <location>
        <begin position="1"/>
        <end position="24"/>
    </location>
</feature>
<feature type="chain" id="PRO_0000004167" description="Nucleobindin-2">
    <location>
        <begin position="25"/>
        <end position="420"/>
    </location>
</feature>
<feature type="chain" id="PRO_0000419821" description="Nesfatin-1">
    <location>
        <begin position="25"/>
        <end position="106"/>
    </location>
</feature>
<feature type="domain" description="EF-hand 1" evidence="5">
    <location>
        <begin position="241"/>
        <end position="276"/>
    </location>
</feature>
<feature type="domain" description="EF-hand 2" evidence="5">
    <location>
        <begin position="293"/>
        <end position="328"/>
    </location>
</feature>
<feature type="DNA-binding region" evidence="1">
    <location>
        <begin position="171"/>
        <end position="223"/>
    </location>
</feature>
<feature type="region of interest" description="Disordered" evidence="6">
    <location>
        <begin position="194"/>
        <end position="225"/>
    </location>
</feature>
<feature type="region of interest" description="Binds to necdin" evidence="1">
    <location>
        <begin position="213"/>
        <end position="420"/>
    </location>
</feature>
<feature type="region of interest" description="Disordered" evidence="6">
    <location>
        <begin position="366"/>
        <end position="420"/>
    </location>
</feature>
<feature type="short sequence motif" description="GBA" evidence="2">
    <location>
        <begin position="304"/>
        <end position="334"/>
    </location>
</feature>
<feature type="compositionally biased region" description="Basic and acidic residues" evidence="6">
    <location>
        <begin position="366"/>
        <end position="386"/>
    </location>
</feature>
<feature type="compositionally biased region" description="Low complexity" evidence="6">
    <location>
        <begin position="387"/>
        <end position="396"/>
    </location>
</feature>
<feature type="binding site" evidence="5">
    <location>
        <position position="254"/>
    </location>
    <ligand>
        <name>Ca(2+)</name>
        <dbReference type="ChEBI" id="CHEBI:29108"/>
        <label>1</label>
    </ligand>
</feature>
<feature type="binding site" evidence="5">
    <location>
        <position position="256"/>
    </location>
    <ligand>
        <name>Ca(2+)</name>
        <dbReference type="ChEBI" id="CHEBI:29108"/>
        <label>1</label>
    </ligand>
</feature>
<feature type="binding site" evidence="5">
    <location>
        <position position="258"/>
    </location>
    <ligand>
        <name>Ca(2+)</name>
        <dbReference type="ChEBI" id="CHEBI:29108"/>
        <label>1</label>
    </ligand>
</feature>
<feature type="binding site" evidence="5">
    <location>
        <position position="265"/>
    </location>
    <ligand>
        <name>Ca(2+)</name>
        <dbReference type="ChEBI" id="CHEBI:29108"/>
        <label>1</label>
    </ligand>
</feature>
<feature type="binding site" evidence="5">
    <location>
        <position position="306"/>
    </location>
    <ligand>
        <name>Ca(2+)</name>
        <dbReference type="ChEBI" id="CHEBI:29108"/>
        <label>2</label>
    </ligand>
</feature>
<feature type="binding site" evidence="5">
    <location>
        <position position="308"/>
    </location>
    <ligand>
        <name>Ca(2+)</name>
        <dbReference type="ChEBI" id="CHEBI:29108"/>
        <label>2</label>
    </ligand>
</feature>
<feature type="binding site" evidence="5">
    <location>
        <position position="310"/>
    </location>
    <ligand>
        <name>Ca(2+)</name>
        <dbReference type="ChEBI" id="CHEBI:29108"/>
        <label>2</label>
    </ligand>
</feature>
<feature type="binding site" evidence="5">
    <location>
        <position position="317"/>
    </location>
    <ligand>
        <name>Ca(2+)</name>
        <dbReference type="ChEBI" id="CHEBI:29108"/>
        <label>2</label>
    </ligand>
</feature>
<feature type="modified residue" description="Phosphoserine" evidence="11">
    <location>
        <position position="332"/>
    </location>
</feature>
<feature type="mutagenesis site" description="Abolishes binding to and activation of GNAI3; when associated with A-319." evidence="8">
    <original>L</original>
    <variation>A</variation>
    <location>
        <position position="315"/>
    </location>
</feature>
<feature type="mutagenesis site" description="Abolishes binding to and activation of GNAI3." evidence="8">
    <original>F</original>
    <variation>A</variation>
    <location>
        <position position="318"/>
    </location>
</feature>
<feature type="mutagenesis site" description="Abolishes binding to and activation of GNAI3; when associated with A-315." evidence="8">
    <original>L</original>
    <variation>A</variation>
    <location>
        <position position="319"/>
    </location>
</feature>
<feature type="sequence conflict" description="In Ref. 2; AAK66864." evidence="10" ref="2">
    <original>E</original>
    <variation>D</variation>
    <location>
        <position position="38"/>
    </location>
</feature>
<feature type="sequence conflict" description="In Ref. 2; AAK66864." evidence="10" ref="2">
    <original>S</original>
    <variation>G</variation>
    <location>
        <position position="352"/>
    </location>
</feature>
<organism>
    <name type="scientific">Rattus norvegicus</name>
    <name type="common">Rat</name>
    <dbReference type="NCBI Taxonomy" id="10116"/>
    <lineage>
        <taxon>Eukaryota</taxon>
        <taxon>Metazoa</taxon>
        <taxon>Chordata</taxon>
        <taxon>Craniata</taxon>
        <taxon>Vertebrata</taxon>
        <taxon>Euteleostomi</taxon>
        <taxon>Mammalia</taxon>
        <taxon>Eutheria</taxon>
        <taxon>Euarchontoglires</taxon>
        <taxon>Glires</taxon>
        <taxon>Rodentia</taxon>
        <taxon>Myomorpha</taxon>
        <taxon>Muroidea</taxon>
        <taxon>Muridae</taxon>
        <taxon>Murinae</taxon>
        <taxon>Rattus</taxon>
    </lineage>
</organism>